<sequence length="428" mass="45696">MKIHKHAPMNGVIHIPGDKSISHRSVMFGAIANGTTVVKNFLPGADCLSTIDCFRKMGVDIEQKGTDVVIHGKGLKELKEPSDVLDVGNSGTTIRLMMGILAGCEFHSTLIGDESIAKRPMQRVTGPLKQLGAKIDGRANGEYTPLSIRGGHLKGISYESPVASAQIKSAVLLAGLQAEGTTTLTEPHKSRDHTERMLSMFGVKLDEDEQSVSIEGGQTLKATDIFVPGDISSAAFFLVAGSIVPNSRIVLKNVGLNKTRTGIIDVLKQMGANLEINEVDAKGGEPYGDLTISTSSLKGIEISGDVISRLIDEIPIIALLATQAEGTTIIKDAAELKVKETNRIDTVVSELKKLGADIEATEDGMKIHGKTPLQGGAVVSSYGDHRIGMMLGIAACITKQAVEIEDTDAVRVSYPNFFEHIEYLTKTV</sequence>
<proteinExistence type="inferred from homology"/>
<protein>
    <recommendedName>
        <fullName evidence="1">3-phosphoshikimate 1-carboxyvinyltransferase</fullName>
        <ecNumber evidence="1">2.5.1.19</ecNumber>
    </recommendedName>
    <alternativeName>
        <fullName evidence="1">5-enolpyruvylshikimate-3-phosphate synthase</fullName>
        <shortName evidence="1">EPSP synthase</shortName>
        <shortName evidence="1">EPSPS</shortName>
    </alternativeName>
</protein>
<gene>
    <name evidence="1" type="primary">aroA</name>
    <name type="ordered locus">BPUM_1991</name>
</gene>
<feature type="chain" id="PRO_0000325333" description="3-phosphoshikimate 1-carboxyvinyltransferase">
    <location>
        <begin position="1"/>
        <end position="428"/>
    </location>
</feature>
<feature type="active site" description="Proton acceptor" evidence="1">
    <location>
        <position position="312"/>
    </location>
</feature>
<feature type="binding site" evidence="1">
    <location>
        <position position="19"/>
    </location>
    <ligand>
        <name>3-phosphoshikimate</name>
        <dbReference type="ChEBI" id="CHEBI:145989"/>
    </ligand>
</feature>
<feature type="binding site" evidence="1">
    <location>
        <position position="19"/>
    </location>
    <ligand>
        <name>phosphoenolpyruvate</name>
        <dbReference type="ChEBI" id="CHEBI:58702"/>
    </ligand>
</feature>
<feature type="binding site" evidence="1">
    <location>
        <position position="20"/>
    </location>
    <ligand>
        <name>3-phosphoshikimate</name>
        <dbReference type="ChEBI" id="CHEBI:145989"/>
    </ligand>
</feature>
<feature type="binding site" evidence="1">
    <location>
        <position position="24"/>
    </location>
    <ligand>
        <name>3-phosphoshikimate</name>
        <dbReference type="ChEBI" id="CHEBI:145989"/>
    </ligand>
</feature>
<feature type="binding site" evidence="1">
    <location>
        <position position="91"/>
    </location>
    <ligand>
        <name>phosphoenolpyruvate</name>
        <dbReference type="ChEBI" id="CHEBI:58702"/>
    </ligand>
</feature>
<feature type="binding site" evidence="1">
    <location>
        <position position="119"/>
    </location>
    <ligand>
        <name>phosphoenolpyruvate</name>
        <dbReference type="ChEBI" id="CHEBI:58702"/>
    </ligand>
</feature>
<feature type="binding site" evidence="1">
    <location>
        <position position="164"/>
    </location>
    <ligand>
        <name>3-phosphoshikimate</name>
        <dbReference type="ChEBI" id="CHEBI:145989"/>
    </ligand>
</feature>
<feature type="binding site" evidence="1">
    <location>
        <position position="166"/>
    </location>
    <ligand>
        <name>3-phosphoshikimate</name>
        <dbReference type="ChEBI" id="CHEBI:145989"/>
    </ligand>
</feature>
<feature type="binding site" evidence="1">
    <location>
        <position position="166"/>
    </location>
    <ligand>
        <name>phosphoenolpyruvate</name>
        <dbReference type="ChEBI" id="CHEBI:58702"/>
    </ligand>
</feature>
<feature type="binding site" evidence="1">
    <location>
        <position position="312"/>
    </location>
    <ligand>
        <name>3-phosphoshikimate</name>
        <dbReference type="ChEBI" id="CHEBI:145989"/>
    </ligand>
</feature>
<feature type="binding site" evidence="1">
    <location>
        <position position="339"/>
    </location>
    <ligand>
        <name>3-phosphoshikimate</name>
        <dbReference type="ChEBI" id="CHEBI:145989"/>
    </ligand>
</feature>
<feature type="binding site" evidence="1">
    <location>
        <position position="343"/>
    </location>
    <ligand>
        <name>phosphoenolpyruvate</name>
        <dbReference type="ChEBI" id="CHEBI:58702"/>
    </ligand>
</feature>
<feature type="binding site" evidence="1">
    <location>
        <position position="386"/>
    </location>
    <ligand>
        <name>phosphoenolpyruvate</name>
        <dbReference type="ChEBI" id="CHEBI:58702"/>
    </ligand>
</feature>
<dbReference type="EC" id="2.5.1.19" evidence="1"/>
<dbReference type="EMBL" id="CP000813">
    <property type="protein sequence ID" value="ABV62661.1"/>
    <property type="molecule type" value="Genomic_DNA"/>
</dbReference>
<dbReference type="RefSeq" id="WP_012010372.1">
    <property type="nucleotide sequence ID" value="NC_009848.4"/>
</dbReference>
<dbReference type="SMR" id="A8FEJ4"/>
<dbReference type="STRING" id="315750.BPUM_1991"/>
<dbReference type="GeneID" id="5621257"/>
<dbReference type="KEGG" id="bpu:BPUM_1991"/>
<dbReference type="eggNOG" id="COG0128">
    <property type="taxonomic scope" value="Bacteria"/>
</dbReference>
<dbReference type="HOGENOM" id="CLU_024321_0_1_9"/>
<dbReference type="OrthoDB" id="9809920at2"/>
<dbReference type="UniPathway" id="UPA00053">
    <property type="reaction ID" value="UER00089"/>
</dbReference>
<dbReference type="Proteomes" id="UP000001355">
    <property type="component" value="Chromosome"/>
</dbReference>
<dbReference type="GO" id="GO:0005737">
    <property type="term" value="C:cytoplasm"/>
    <property type="evidence" value="ECO:0007669"/>
    <property type="project" value="UniProtKB-SubCell"/>
</dbReference>
<dbReference type="GO" id="GO:0003866">
    <property type="term" value="F:3-phosphoshikimate 1-carboxyvinyltransferase activity"/>
    <property type="evidence" value="ECO:0007669"/>
    <property type="project" value="UniProtKB-UniRule"/>
</dbReference>
<dbReference type="GO" id="GO:0008652">
    <property type="term" value="P:amino acid biosynthetic process"/>
    <property type="evidence" value="ECO:0007669"/>
    <property type="project" value="UniProtKB-KW"/>
</dbReference>
<dbReference type="GO" id="GO:0009073">
    <property type="term" value="P:aromatic amino acid family biosynthetic process"/>
    <property type="evidence" value="ECO:0007669"/>
    <property type="project" value="UniProtKB-KW"/>
</dbReference>
<dbReference type="GO" id="GO:0009423">
    <property type="term" value="P:chorismate biosynthetic process"/>
    <property type="evidence" value="ECO:0007669"/>
    <property type="project" value="UniProtKB-UniRule"/>
</dbReference>
<dbReference type="CDD" id="cd01556">
    <property type="entry name" value="EPSP_synthase"/>
    <property type="match status" value="1"/>
</dbReference>
<dbReference type="FunFam" id="3.65.10.10:FF:000005">
    <property type="entry name" value="3-phosphoshikimate 1-carboxyvinyltransferase"/>
    <property type="match status" value="1"/>
</dbReference>
<dbReference type="FunFam" id="3.65.10.10:FF:000006">
    <property type="entry name" value="3-phosphoshikimate 1-carboxyvinyltransferase"/>
    <property type="match status" value="1"/>
</dbReference>
<dbReference type="Gene3D" id="3.65.10.10">
    <property type="entry name" value="Enolpyruvate transferase domain"/>
    <property type="match status" value="2"/>
</dbReference>
<dbReference type="HAMAP" id="MF_00210">
    <property type="entry name" value="EPSP_synth"/>
    <property type="match status" value="1"/>
</dbReference>
<dbReference type="InterPro" id="IPR001986">
    <property type="entry name" value="Enolpyruvate_Tfrase_dom"/>
</dbReference>
<dbReference type="InterPro" id="IPR036968">
    <property type="entry name" value="Enolpyruvate_Tfrase_sf"/>
</dbReference>
<dbReference type="InterPro" id="IPR006264">
    <property type="entry name" value="EPSP_synthase"/>
</dbReference>
<dbReference type="InterPro" id="IPR023193">
    <property type="entry name" value="EPSP_synthase_CS"/>
</dbReference>
<dbReference type="InterPro" id="IPR013792">
    <property type="entry name" value="RNA3'P_cycl/enolpyr_Trfase_a/b"/>
</dbReference>
<dbReference type="NCBIfam" id="TIGR01356">
    <property type="entry name" value="aroA"/>
    <property type="match status" value="1"/>
</dbReference>
<dbReference type="PANTHER" id="PTHR21090">
    <property type="entry name" value="AROM/DEHYDROQUINATE SYNTHASE"/>
    <property type="match status" value="1"/>
</dbReference>
<dbReference type="PANTHER" id="PTHR21090:SF5">
    <property type="entry name" value="PENTAFUNCTIONAL AROM POLYPEPTIDE"/>
    <property type="match status" value="1"/>
</dbReference>
<dbReference type="Pfam" id="PF00275">
    <property type="entry name" value="EPSP_synthase"/>
    <property type="match status" value="1"/>
</dbReference>
<dbReference type="PIRSF" id="PIRSF000505">
    <property type="entry name" value="EPSPS"/>
    <property type="match status" value="1"/>
</dbReference>
<dbReference type="SUPFAM" id="SSF55205">
    <property type="entry name" value="EPT/RTPC-like"/>
    <property type="match status" value="1"/>
</dbReference>
<dbReference type="PROSITE" id="PS00104">
    <property type="entry name" value="EPSP_SYNTHASE_1"/>
    <property type="match status" value="1"/>
</dbReference>
<dbReference type="PROSITE" id="PS00885">
    <property type="entry name" value="EPSP_SYNTHASE_2"/>
    <property type="match status" value="1"/>
</dbReference>
<comment type="function">
    <text evidence="1">Catalyzes the transfer of the enolpyruvyl moiety of phosphoenolpyruvate (PEP) to the 5-hydroxyl of shikimate-3-phosphate (S3P) to produce enolpyruvyl shikimate-3-phosphate and inorganic phosphate.</text>
</comment>
<comment type="catalytic activity">
    <reaction evidence="1">
        <text>3-phosphoshikimate + phosphoenolpyruvate = 5-O-(1-carboxyvinyl)-3-phosphoshikimate + phosphate</text>
        <dbReference type="Rhea" id="RHEA:21256"/>
        <dbReference type="ChEBI" id="CHEBI:43474"/>
        <dbReference type="ChEBI" id="CHEBI:57701"/>
        <dbReference type="ChEBI" id="CHEBI:58702"/>
        <dbReference type="ChEBI" id="CHEBI:145989"/>
        <dbReference type="EC" id="2.5.1.19"/>
    </reaction>
    <physiologicalReaction direction="left-to-right" evidence="1">
        <dbReference type="Rhea" id="RHEA:21257"/>
    </physiologicalReaction>
</comment>
<comment type="pathway">
    <text evidence="1">Metabolic intermediate biosynthesis; chorismate biosynthesis; chorismate from D-erythrose 4-phosphate and phosphoenolpyruvate: step 6/7.</text>
</comment>
<comment type="subunit">
    <text evidence="1">Monomer.</text>
</comment>
<comment type="subcellular location">
    <subcellularLocation>
        <location evidence="1">Cytoplasm</location>
    </subcellularLocation>
</comment>
<comment type="similarity">
    <text evidence="1">Belongs to the EPSP synthase family.</text>
</comment>
<reference key="1">
    <citation type="journal article" date="2007" name="PLoS ONE">
        <title>Paradoxical DNA repair and peroxide resistance gene conservation in Bacillus pumilus SAFR-032.</title>
        <authorList>
            <person name="Gioia J."/>
            <person name="Yerrapragada S."/>
            <person name="Qin X."/>
            <person name="Jiang H."/>
            <person name="Igboeli O.C."/>
            <person name="Muzny D."/>
            <person name="Dugan-Rocha S."/>
            <person name="Ding Y."/>
            <person name="Hawes A."/>
            <person name="Liu W."/>
            <person name="Perez L."/>
            <person name="Kovar C."/>
            <person name="Dinh H."/>
            <person name="Lee S."/>
            <person name="Nazareth L."/>
            <person name="Blyth P."/>
            <person name="Holder M."/>
            <person name="Buhay C."/>
            <person name="Tirumalai M.R."/>
            <person name="Liu Y."/>
            <person name="Dasgupta I."/>
            <person name="Bokhetache L."/>
            <person name="Fujita M."/>
            <person name="Karouia F."/>
            <person name="Eswara Moorthy P."/>
            <person name="Siefert J."/>
            <person name="Uzman A."/>
            <person name="Buzumbo P."/>
            <person name="Verma A."/>
            <person name="Zwiya H."/>
            <person name="McWilliams B.D."/>
            <person name="Olowu A."/>
            <person name="Clinkenbeard K.D."/>
            <person name="Newcombe D."/>
            <person name="Golebiewski L."/>
            <person name="Petrosino J.F."/>
            <person name="Nicholson W.L."/>
            <person name="Fox G.E."/>
            <person name="Venkateswaran K."/>
            <person name="Highlander S.K."/>
            <person name="Weinstock G.M."/>
        </authorList>
    </citation>
    <scope>NUCLEOTIDE SEQUENCE [LARGE SCALE GENOMIC DNA]</scope>
    <source>
        <strain>SAFR-032</strain>
    </source>
</reference>
<evidence type="ECO:0000255" key="1">
    <source>
        <dbReference type="HAMAP-Rule" id="MF_00210"/>
    </source>
</evidence>
<name>AROA_BACP2</name>
<keyword id="KW-0028">Amino-acid biosynthesis</keyword>
<keyword id="KW-0057">Aromatic amino acid biosynthesis</keyword>
<keyword id="KW-0963">Cytoplasm</keyword>
<keyword id="KW-0808">Transferase</keyword>
<accession>A8FEJ4</accession>
<organism>
    <name type="scientific">Bacillus pumilus (strain SAFR-032)</name>
    <dbReference type="NCBI Taxonomy" id="315750"/>
    <lineage>
        <taxon>Bacteria</taxon>
        <taxon>Bacillati</taxon>
        <taxon>Bacillota</taxon>
        <taxon>Bacilli</taxon>
        <taxon>Bacillales</taxon>
        <taxon>Bacillaceae</taxon>
        <taxon>Bacillus</taxon>
    </lineage>
</organism>